<reference key="1">
    <citation type="submission" date="2007-06" db="EMBL/GenBank/DDBJ databases">
        <title>Complete sequence of Clostridium beijerinckii NCIMB 8052.</title>
        <authorList>
            <consortium name="US DOE Joint Genome Institute"/>
            <person name="Copeland A."/>
            <person name="Lucas S."/>
            <person name="Lapidus A."/>
            <person name="Barry K."/>
            <person name="Detter J.C."/>
            <person name="Glavina del Rio T."/>
            <person name="Hammon N."/>
            <person name="Israni S."/>
            <person name="Dalin E."/>
            <person name="Tice H."/>
            <person name="Pitluck S."/>
            <person name="Sims D."/>
            <person name="Brettin T."/>
            <person name="Bruce D."/>
            <person name="Tapia R."/>
            <person name="Brainard J."/>
            <person name="Schmutz J."/>
            <person name="Larimer F."/>
            <person name="Land M."/>
            <person name="Hauser L."/>
            <person name="Kyrpides N."/>
            <person name="Mikhailova N."/>
            <person name="Bennet G."/>
            <person name="Cann I."/>
            <person name="Chen J.-S."/>
            <person name="Contreras A.L."/>
            <person name="Jones D."/>
            <person name="Kashket E."/>
            <person name="Mitchell W."/>
            <person name="Stoddard S."/>
            <person name="Schwarz W."/>
            <person name="Qureshi N."/>
            <person name="Young M."/>
            <person name="Shi Z."/>
            <person name="Ezeji T."/>
            <person name="White B."/>
            <person name="Blaschek H."/>
            <person name="Richardson P."/>
        </authorList>
    </citation>
    <scope>NUCLEOTIDE SEQUENCE [LARGE SCALE GENOMIC DNA]</scope>
    <source>
        <strain>ATCC 51743 / NCIMB 8052</strain>
    </source>
</reference>
<keyword id="KW-0275">Fatty acid biosynthesis</keyword>
<keyword id="KW-0276">Fatty acid metabolism</keyword>
<keyword id="KW-0444">Lipid biosynthesis</keyword>
<keyword id="KW-0443">Lipid metabolism</keyword>
<keyword id="KW-0520">NAD</keyword>
<keyword id="KW-0560">Oxidoreductase</keyword>
<feature type="chain" id="PRO_1000088450" description="Trans-2-enoyl-CoA reductase [NADH]">
    <location>
        <begin position="1"/>
        <end position="398"/>
    </location>
</feature>
<feature type="active site" description="Proton donor" evidence="1">
    <location>
        <position position="235"/>
    </location>
</feature>
<feature type="binding site" evidence="1">
    <location>
        <begin position="47"/>
        <end position="52"/>
    </location>
    <ligand>
        <name>NAD(+)</name>
        <dbReference type="ChEBI" id="CHEBI:57540"/>
    </ligand>
</feature>
<feature type="binding site" evidence="1">
    <location>
        <begin position="74"/>
        <end position="75"/>
    </location>
    <ligand>
        <name>NAD(+)</name>
        <dbReference type="ChEBI" id="CHEBI:57540"/>
    </ligand>
</feature>
<feature type="binding site" evidence="1">
    <location>
        <begin position="111"/>
        <end position="112"/>
    </location>
    <ligand>
        <name>NAD(+)</name>
        <dbReference type="ChEBI" id="CHEBI:57540"/>
    </ligand>
</feature>
<feature type="binding site" evidence="1">
    <location>
        <begin position="139"/>
        <end position="140"/>
    </location>
    <ligand>
        <name>NAD(+)</name>
        <dbReference type="ChEBI" id="CHEBI:57540"/>
    </ligand>
</feature>
<feature type="binding site" evidence="1">
    <location>
        <position position="225"/>
    </location>
    <ligand>
        <name>substrate</name>
    </ligand>
</feature>
<feature type="binding site" evidence="1">
    <location>
        <position position="244"/>
    </location>
    <ligand>
        <name>NAD(+)</name>
        <dbReference type="ChEBI" id="CHEBI:57540"/>
    </ligand>
</feature>
<feature type="binding site" evidence="1">
    <location>
        <begin position="274"/>
        <end position="276"/>
    </location>
    <ligand>
        <name>NAD(+)</name>
        <dbReference type="ChEBI" id="CHEBI:57540"/>
    </ligand>
</feature>
<feature type="site" description="Plays an important role in discriminating NADH against NADPH" evidence="1">
    <location>
        <position position="75"/>
    </location>
</feature>
<sequence length="398" mass="45231">MIFKPELIKGIAKTSHPYGCRKEVLNQIEYCKNAKQFHGPKKVLIIGASSGFGLATRISLAFGGAKADTIGVSFETGITDRRTGTAGWYNNIFFKEFAEKEGLIAKNFIGDAFSDEVKENVIKYIKNEFGKIDLLIYSLASPRRKDPKTGNIYDSTLKTTSGEFQGPTIDMETDELVTTKVNSATDKEIEATKKVMGGEDWSEWCKLLLENDCLSDKAITISYSYIGASRTYKIYREGTIGEAKRHLENTAIQIDKEWQKKINGKAFVSVNKAIVTKASAYIPSFSLYAAVLYKVMKEKNLHENCIMQMQRMFADKIYAENLLEFDDSGRLRMDDWELREDVQSEVNELWEKITPDNFKILSDYDGYKKEFMQLNGFEIDGVNYSEDIDIEALKRLEP</sequence>
<protein>
    <recommendedName>
        <fullName evidence="1">Trans-2-enoyl-CoA reductase [NADH]</fullName>
        <shortName evidence="1">TER</shortName>
        <ecNumber evidence="1">1.3.1.44</ecNumber>
    </recommendedName>
</protein>
<name>FABV_CLOB8</name>
<dbReference type="EC" id="1.3.1.44" evidence="1"/>
<dbReference type="EMBL" id="CP000721">
    <property type="protein sequence ID" value="ABR34253.1"/>
    <property type="molecule type" value="Genomic_DNA"/>
</dbReference>
<dbReference type="RefSeq" id="WP_012058312.1">
    <property type="nucleotide sequence ID" value="NC_009617.1"/>
</dbReference>
<dbReference type="SMR" id="A6LV73"/>
<dbReference type="KEGG" id="cbe:Cbei_2086"/>
<dbReference type="eggNOG" id="COG3007">
    <property type="taxonomic scope" value="Bacteria"/>
</dbReference>
<dbReference type="HOGENOM" id="CLU_057698_1_0_9"/>
<dbReference type="UniPathway" id="UPA00094"/>
<dbReference type="Proteomes" id="UP000000565">
    <property type="component" value="Chromosome"/>
</dbReference>
<dbReference type="GO" id="GO:0004318">
    <property type="term" value="F:enoyl-[acyl-carrier-protein] reductase (NADH) activity"/>
    <property type="evidence" value="ECO:0007669"/>
    <property type="project" value="TreeGrafter"/>
</dbReference>
<dbReference type="GO" id="GO:0051287">
    <property type="term" value="F:NAD binding"/>
    <property type="evidence" value="ECO:0007669"/>
    <property type="project" value="UniProtKB-UniRule"/>
</dbReference>
<dbReference type="GO" id="GO:0050343">
    <property type="term" value="F:trans-2-enoyl-CoA reductase (NADH) activity"/>
    <property type="evidence" value="ECO:0007669"/>
    <property type="project" value="UniProtKB-UniRule"/>
</dbReference>
<dbReference type="GO" id="GO:0006633">
    <property type="term" value="P:fatty acid biosynthetic process"/>
    <property type="evidence" value="ECO:0007669"/>
    <property type="project" value="UniProtKB-UniRule"/>
</dbReference>
<dbReference type="Gene3D" id="3.40.50.720">
    <property type="entry name" value="NAD(P)-binding Rossmann-like Domain"/>
    <property type="match status" value="1"/>
</dbReference>
<dbReference type="HAMAP" id="MF_01838">
    <property type="entry name" value="FabV_reductase"/>
    <property type="match status" value="1"/>
</dbReference>
<dbReference type="InterPro" id="IPR024906">
    <property type="entry name" value="Eno_Rdtase_FAD-bd_dom"/>
</dbReference>
<dbReference type="InterPro" id="IPR024910">
    <property type="entry name" value="Enoyl-CoA_Rdtase_cat_dom"/>
</dbReference>
<dbReference type="InterPro" id="IPR050048">
    <property type="entry name" value="FabV-like_NADH_b"/>
</dbReference>
<dbReference type="InterPro" id="IPR036291">
    <property type="entry name" value="NAD(P)-bd_dom_sf"/>
</dbReference>
<dbReference type="InterPro" id="IPR010758">
    <property type="entry name" value="Trans-2-enoyl-CoA_reductase"/>
</dbReference>
<dbReference type="NCBIfam" id="NF043048">
    <property type="entry name" value="EnoyACPredFabV"/>
    <property type="match status" value="1"/>
</dbReference>
<dbReference type="NCBIfam" id="NF010177">
    <property type="entry name" value="PRK13656.1"/>
    <property type="match status" value="1"/>
</dbReference>
<dbReference type="PANTHER" id="PTHR37480">
    <property type="entry name" value="ENOYL-[ACYL-CARRIER-PROTEIN] REDUCTASE [NADH]"/>
    <property type="match status" value="1"/>
</dbReference>
<dbReference type="PANTHER" id="PTHR37480:SF1">
    <property type="entry name" value="ENOYL-[ACYL-CARRIER-PROTEIN] REDUCTASE [NADH]"/>
    <property type="match status" value="1"/>
</dbReference>
<dbReference type="Pfam" id="PF07055">
    <property type="entry name" value="Eno-Rase_FAD_bd"/>
    <property type="match status" value="1"/>
</dbReference>
<dbReference type="Pfam" id="PF12242">
    <property type="entry name" value="Eno-Rase_NADH_b"/>
    <property type="match status" value="1"/>
</dbReference>
<dbReference type="Pfam" id="PF12241">
    <property type="entry name" value="Enoyl_reductase"/>
    <property type="match status" value="1"/>
</dbReference>
<dbReference type="SUPFAM" id="SSF51735">
    <property type="entry name" value="NAD(P)-binding Rossmann-fold domains"/>
    <property type="match status" value="1"/>
</dbReference>
<gene>
    <name evidence="1" type="primary">fabV</name>
    <name type="ordered locus">Cbei_2086</name>
</gene>
<comment type="function">
    <text evidence="1">Involved in the fatty acid synthesis (FAS II). Catalyzes the reduction of a carbon-carbon double bond in an enoyl moiety that is covalently linked to a coenzyme A (CoA).</text>
</comment>
<comment type="catalytic activity">
    <reaction evidence="1">
        <text>a 2,3-saturated acyl-CoA + NAD(+) = a (2E)-enoyl-CoA + NADH + H(+)</text>
        <dbReference type="Rhea" id="RHEA:18177"/>
        <dbReference type="ChEBI" id="CHEBI:15378"/>
        <dbReference type="ChEBI" id="CHEBI:57540"/>
        <dbReference type="ChEBI" id="CHEBI:57945"/>
        <dbReference type="ChEBI" id="CHEBI:58856"/>
        <dbReference type="ChEBI" id="CHEBI:65111"/>
        <dbReference type="EC" id="1.3.1.44"/>
    </reaction>
</comment>
<comment type="pathway">
    <text evidence="1">Lipid metabolism; fatty acid biosynthesis.</text>
</comment>
<comment type="subunit">
    <text evidence="1">Monomer.</text>
</comment>
<comment type="similarity">
    <text evidence="1">Belongs to the TER reductase family.</text>
</comment>
<evidence type="ECO:0000255" key="1">
    <source>
        <dbReference type="HAMAP-Rule" id="MF_01838"/>
    </source>
</evidence>
<proteinExistence type="inferred from homology"/>
<organism>
    <name type="scientific">Clostridium beijerinckii (strain ATCC 51743 / NCIMB 8052)</name>
    <name type="common">Clostridium acetobutylicum</name>
    <dbReference type="NCBI Taxonomy" id="290402"/>
    <lineage>
        <taxon>Bacteria</taxon>
        <taxon>Bacillati</taxon>
        <taxon>Bacillota</taxon>
        <taxon>Clostridia</taxon>
        <taxon>Eubacteriales</taxon>
        <taxon>Clostridiaceae</taxon>
        <taxon>Clostridium</taxon>
    </lineage>
</organism>
<accession>A6LV73</accession>